<sequence>MAIQQRDSRGGTNRDARTNRRIKAREVRAIGPEGEQLGVLPIEQALARAQELGMDLVEVSPMAKPPVCKIMDYGKFKYLEKKKQNEAKKKQVVVQLKEVKLRPRTEEHDYATKIKKVREFLGESNKARITVTFRGREMSHRELGQKVLQRIIEDLREVAVIEAAPRMEGRQMFMILAPNPRMLQAQRDRAKAAAQAAPAAAPQPGAPAAPPAAPAPAPAPEQTPEAGPR</sequence>
<protein>
    <recommendedName>
        <fullName evidence="1">Translation initiation factor IF-3</fullName>
    </recommendedName>
</protein>
<comment type="function">
    <text evidence="1">IF-3 binds to the 30S ribosomal subunit and shifts the equilibrium between 70S ribosomes and their 50S and 30S subunits in favor of the free subunits, thus enhancing the availability of 30S subunits on which protein synthesis initiation begins.</text>
</comment>
<comment type="subunit">
    <text evidence="1">Monomer.</text>
</comment>
<comment type="subcellular location">
    <subcellularLocation>
        <location evidence="1">Cytoplasm</location>
    </subcellularLocation>
</comment>
<comment type="similarity">
    <text evidence="1">Belongs to the IF-3 family.</text>
</comment>
<proteinExistence type="inferred from homology"/>
<reference key="1">
    <citation type="journal article" date="2015" name="Genome Announc.">
        <title>Complete genome sequence of Anaeromyxobacter sp. Fw109-5, an anaerobic, metal-reducing bacterium isolated from a contaminated subsurface environment.</title>
        <authorList>
            <person name="Hwang C."/>
            <person name="Copeland A."/>
            <person name="Lucas S."/>
            <person name="Lapidus A."/>
            <person name="Barry K."/>
            <person name="Glavina Del Rio T."/>
            <person name="Dalin E."/>
            <person name="Tice H."/>
            <person name="Pitluck S."/>
            <person name="Sims D."/>
            <person name="Brettin T."/>
            <person name="Bruce D.C."/>
            <person name="Detter J.C."/>
            <person name="Han C.S."/>
            <person name="Schmutz J."/>
            <person name="Larimer F.W."/>
            <person name="Land M.L."/>
            <person name="Hauser L.J."/>
            <person name="Kyrpides N."/>
            <person name="Lykidis A."/>
            <person name="Richardson P."/>
            <person name="Belieav A."/>
            <person name="Sanford R.A."/>
            <person name="Loeffler F.E."/>
            <person name="Fields M.W."/>
        </authorList>
    </citation>
    <scope>NUCLEOTIDE SEQUENCE [LARGE SCALE GENOMIC DNA]</scope>
    <source>
        <strain>Fw109-5</strain>
    </source>
</reference>
<evidence type="ECO:0000255" key="1">
    <source>
        <dbReference type="HAMAP-Rule" id="MF_00080"/>
    </source>
</evidence>
<evidence type="ECO:0000256" key="2">
    <source>
        <dbReference type="SAM" id="MobiDB-lite"/>
    </source>
</evidence>
<accession>A7HBI7</accession>
<keyword id="KW-0963">Cytoplasm</keyword>
<keyword id="KW-0396">Initiation factor</keyword>
<keyword id="KW-0648">Protein biosynthesis</keyword>
<keyword id="KW-1185">Reference proteome</keyword>
<gene>
    <name evidence="1" type="primary">infC</name>
    <name type="ordered locus">Anae109_1880</name>
</gene>
<organism>
    <name type="scientific">Anaeromyxobacter sp. (strain Fw109-5)</name>
    <dbReference type="NCBI Taxonomy" id="404589"/>
    <lineage>
        <taxon>Bacteria</taxon>
        <taxon>Pseudomonadati</taxon>
        <taxon>Myxococcota</taxon>
        <taxon>Myxococcia</taxon>
        <taxon>Myxococcales</taxon>
        <taxon>Cystobacterineae</taxon>
        <taxon>Anaeromyxobacteraceae</taxon>
        <taxon>Anaeromyxobacter</taxon>
    </lineage>
</organism>
<name>IF3_ANADF</name>
<dbReference type="EMBL" id="CP000769">
    <property type="protein sequence ID" value="ABS26083.1"/>
    <property type="molecule type" value="Genomic_DNA"/>
</dbReference>
<dbReference type="RefSeq" id="WP_012096661.1">
    <property type="nucleotide sequence ID" value="NC_009675.1"/>
</dbReference>
<dbReference type="SMR" id="A7HBI7"/>
<dbReference type="STRING" id="404589.Anae109_1880"/>
<dbReference type="KEGG" id="afw:Anae109_1880"/>
<dbReference type="eggNOG" id="COG0290">
    <property type="taxonomic scope" value="Bacteria"/>
</dbReference>
<dbReference type="HOGENOM" id="CLU_054919_0_3_7"/>
<dbReference type="OrthoDB" id="9806014at2"/>
<dbReference type="Proteomes" id="UP000006382">
    <property type="component" value="Chromosome"/>
</dbReference>
<dbReference type="GO" id="GO:0005829">
    <property type="term" value="C:cytosol"/>
    <property type="evidence" value="ECO:0007669"/>
    <property type="project" value="TreeGrafter"/>
</dbReference>
<dbReference type="GO" id="GO:0016020">
    <property type="term" value="C:membrane"/>
    <property type="evidence" value="ECO:0007669"/>
    <property type="project" value="TreeGrafter"/>
</dbReference>
<dbReference type="GO" id="GO:0043022">
    <property type="term" value="F:ribosome binding"/>
    <property type="evidence" value="ECO:0007669"/>
    <property type="project" value="TreeGrafter"/>
</dbReference>
<dbReference type="GO" id="GO:0003743">
    <property type="term" value="F:translation initiation factor activity"/>
    <property type="evidence" value="ECO:0007669"/>
    <property type="project" value="UniProtKB-UniRule"/>
</dbReference>
<dbReference type="GO" id="GO:0032790">
    <property type="term" value="P:ribosome disassembly"/>
    <property type="evidence" value="ECO:0007669"/>
    <property type="project" value="TreeGrafter"/>
</dbReference>
<dbReference type="FunFam" id="3.10.20.80:FF:000001">
    <property type="entry name" value="Translation initiation factor IF-3"/>
    <property type="match status" value="1"/>
</dbReference>
<dbReference type="FunFam" id="3.30.110.10:FF:000001">
    <property type="entry name" value="Translation initiation factor IF-3"/>
    <property type="match status" value="1"/>
</dbReference>
<dbReference type="Gene3D" id="3.30.110.10">
    <property type="entry name" value="Translation initiation factor 3 (IF-3), C-terminal domain"/>
    <property type="match status" value="1"/>
</dbReference>
<dbReference type="Gene3D" id="3.10.20.80">
    <property type="entry name" value="Translation initiation factor 3 (IF-3), N-terminal domain"/>
    <property type="match status" value="1"/>
</dbReference>
<dbReference type="HAMAP" id="MF_00080">
    <property type="entry name" value="IF_3"/>
    <property type="match status" value="1"/>
</dbReference>
<dbReference type="InterPro" id="IPR036788">
    <property type="entry name" value="T_IF-3_C_sf"/>
</dbReference>
<dbReference type="InterPro" id="IPR036787">
    <property type="entry name" value="T_IF-3_N_sf"/>
</dbReference>
<dbReference type="InterPro" id="IPR001288">
    <property type="entry name" value="Translation_initiation_fac_3"/>
</dbReference>
<dbReference type="InterPro" id="IPR019815">
    <property type="entry name" value="Translation_initiation_fac_3_C"/>
</dbReference>
<dbReference type="InterPro" id="IPR019814">
    <property type="entry name" value="Translation_initiation_fac_3_N"/>
</dbReference>
<dbReference type="NCBIfam" id="TIGR00168">
    <property type="entry name" value="infC"/>
    <property type="match status" value="1"/>
</dbReference>
<dbReference type="PANTHER" id="PTHR10938">
    <property type="entry name" value="TRANSLATION INITIATION FACTOR IF-3"/>
    <property type="match status" value="1"/>
</dbReference>
<dbReference type="PANTHER" id="PTHR10938:SF0">
    <property type="entry name" value="TRANSLATION INITIATION FACTOR IF-3, MITOCHONDRIAL"/>
    <property type="match status" value="1"/>
</dbReference>
<dbReference type="Pfam" id="PF00707">
    <property type="entry name" value="IF3_C"/>
    <property type="match status" value="1"/>
</dbReference>
<dbReference type="Pfam" id="PF05198">
    <property type="entry name" value="IF3_N"/>
    <property type="match status" value="1"/>
</dbReference>
<dbReference type="SUPFAM" id="SSF55200">
    <property type="entry name" value="Translation initiation factor IF3, C-terminal domain"/>
    <property type="match status" value="1"/>
</dbReference>
<dbReference type="SUPFAM" id="SSF54364">
    <property type="entry name" value="Translation initiation factor IF3, N-terminal domain"/>
    <property type="match status" value="1"/>
</dbReference>
<feature type="chain" id="PRO_1000004524" description="Translation initiation factor IF-3">
    <location>
        <begin position="1"/>
        <end position="229"/>
    </location>
</feature>
<feature type="region of interest" description="Disordered" evidence="2">
    <location>
        <begin position="1"/>
        <end position="21"/>
    </location>
</feature>
<feature type="region of interest" description="Disordered" evidence="2">
    <location>
        <begin position="184"/>
        <end position="229"/>
    </location>
</feature>
<feature type="compositionally biased region" description="Low complexity" evidence="2">
    <location>
        <begin position="192"/>
        <end position="203"/>
    </location>
</feature>
<feature type="compositionally biased region" description="Pro residues" evidence="2">
    <location>
        <begin position="204"/>
        <end position="221"/>
    </location>
</feature>